<organism>
    <name type="scientific">Magnetospira sp. (strain QH-2)</name>
    <name type="common">Marine magnetic spirillum (strain QH-2)</name>
    <dbReference type="NCBI Taxonomy" id="1288970"/>
    <lineage>
        <taxon>Bacteria</taxon>
        <taxon>Pseudomonadati</taxon>
        <taxon>Pseudomonadota</taxon>
        <taxon>Alphaproteobacteria</taxon>
        <taxon>Rhodospirillales</taxon>
        <taxon>Thalassospiraceae</taxon>
        <taxon>Magnetospira</taxon>
    </lineage>
</organism>
<reference key="1">
    <citation type="journal article" date="2014" name="Environ. Microbiol.">
        <title>Comparative genomic analysis provides insights into the evolution and niche adaptation of marine Magnetospira sp. QH-2 strain.</title>
        <authorList>
            <person name="Ji B."/>
            <person name="Zhang S.D."/>
            <person name="Arnoux P."/>
            <person name="Rouy Z."/>
            <person name="Alberto F."/>
            <person name="Philippe N."/>
            <person name="Murat D."/>
            <person name="Zhang W.J."/>
            <person name="Rioux J.B."/>
            <person name="Ginet N."/>
            <person name="Sabaty M."/>
            <person name="Mangenot S."/>
            <person name="Pradel N."/>
            <person name="Tian J."/>
            <person name="Yang J."/>
            <person name="Zhang L."/>
            <person name="Zhang W."/>
            <person name="Pan H."/>
            <person name="Henrissat B."/>
            <person name="Coutinho P.M."/>
            <person name="Li Y."/>
            <person name="Xiao T."/>
            <person name="Medigue C."/>
            <person name="Barbe V."/>
            <person name="Pignol D."/>
            <person name="Talla E."/>
            <person name="Wu L.F."/>
        </authorList>
    </citation>
    <scope>NUCLEOTIDE SEQUENCE [LARGE SCALE GENOMIC DNA]</scope>
    <source>
        <strain>QH-2</strain>
    </source>
</reference>
<reference evidence="7 8 9" key="2">
    <citation type="journal article" date="2018" name="Mol. Microbiol.">
        <title>The dual role of MamB in magnetosome membrane assembly and magnetite biomineralization.</title>
        <authorList>
            <person name="Uebe R."/>
            <person name="Keren-Khadmy N."/>
            <person name="Zeytuni N."/>
            <person name="Katzmann E."/>
            <person name="Navon Y."/>
            <person name="Davidov G."/>
            <person name="Bitton R."/>
            <person name="Plitzko J.M."/>
            <person name="Schuler D."/>
            <person name="Zarivach R."/>
        </authorList>
    </citation>
    <scope>X-RAY CRYSTALLOGRAPHY (1.70 ANGSTROMS) OF 213-293 IN COMPLEX WITH ZINC</scope>
    <scope>FUNCTION</scope>
    <scope>PROBABLE IRON-BINDING</scope>
    <scope>SUBUNIT</scope>
    <scope>DOMAIN</scope>
    <scope>MUTAGENESIS OF ASP-247</scope>
    <source>
        <strain>QH-2</strain>
    </source>
</reference>
<proteinExistence type="evidence at protein level"/>
<comment type="function">
    <text evidence="1 6">Plays a dual, essential role in magnetosome formation; required for magnetosome vesicle formation as well as biomineralization (By similarity). Probably binds and transports iron (Probable). Requires heterodimerization with MamM for stability (By similarity).</text>
</comment>
<comment type="subunit">
    <text evidence="1 3">The isolated C-terminal domain (approximately 213-293) forms homodimers (PubMed:29243866). Forms heterodimers with MamM (By similarity).</text>
</comment>
<comment type="subcellular location">
    <subcellularLocation>
        <location evidence="1">Magnetosome membrane</location>
        <topology evidence="2">Multi-pass membrane protein</topology>
    </subcellularLocation>
</comment>
<comment type="domain">
    <text evidence="3 6">The C-terminal domain (CTD) forms a V-shaped, dimeric metallo-chaperone-like fold and binds 1 metal cation (probably Fe in vivo, structure determined with Zn(2+)) per subunit (PubMed:29243866). The CTD is probably responsible for hetero- and homodimerization (Probable).</text>
</comment>
<comment type="miscellaneous">
    <text evidence="5">This bacteria has on average 16 oval magnetosomes of about 81 X 58 nm which contain membrane-bound crystals of magnetite (Fe(3)O(4)).</text>
</comment>
<comment type="similarity">
    <text evidence="5">Belongs to the cation diffusion facilitator (CDF) transporter (TC 2.A.4) family.</text>
</comment>
<accession>W6KHH6</accession>
<feature type="chain" id="PRO_0000447738" description="Magnetosome protein MamB">
    <location>
        <begin position="1"/>
        <end position="293"/>
    </location>
</feature>
<feature type="topological domain" description="Cytoplasmic" evidence="5">
    <location>
        <begin position="1"/>
        <end position="12"/>
    </location>
</feature>
<feature type="transmembrane region" description="Helical" evidence="2">
    <location>
        <begin position="13"/>
        <end position="33"/>
    </location>
</feature>
<feature type="topological domain" description="Lumenal" evidence="5">
    <location>
        <begin position="34"/>
        <end position="78"/>
    </location>
</feature>
<feature type="transmembrane region" description="Helical" evidence="2">
    <location>
        <begin position="79"/>
        <end position="99"/>
    </location>
</feature>
<feature type="topological domain" description="Cytoplasmic" evidence="5">
    <location>
        <begin position="100"/>
        <end position="105"/>
    </location>
</feature>
<feature type="transmembrane region" description="Helical" evidence="2">
    <location>
        <begin position="106"/>
        <end position="126"/>
    </location>
</feature>
<feature type="topological domain" description="Lumenal" evidence="5">
    <location>
        <begin position="127"/>
        <end position="158"/>
    </location>
</feature>
<feature type="transmembrane region" description="Helical" evidence="2">
    <location>
        <begin position="159"/>
        <end position="179"/>
    </location>
</feature>
<feature type="topological domain" description="Cytoplasmic" evidence="5">
    <location>
        <begin position="180"/>
        <end position="293"/>
    </location>
</feature>
<feature type="region of interest" description="Transmembrane domain (TMD)" evidence="6">
    <location>
        <begin position="1"/>
        <end position="214"/>
    </location>
</feature>
<feature type="region of interest" description="C-terminal domain (CTD)" evidence="6">
    <location>
        <begin position="215"/>
        <end position="293"/>
    </location>
</feature>
<feature type="binding site" evidence="3 7">
    <location>
        <position position="245"/>
    </location>
    <ligand>
        <name>Zn(2+)</name>
        <dbReference type="ChEBI" id="CHEBI:29105"/>
    </ligand>
</feature>
<feature type="binding site" evidence="3 7">
    <location>
        <position position="247"/>
    </location>
    <ligand>
        <name>Zn(2+)</name>
        <dbReference type="ChEBI" id="CHEBI:29105"/>
    </ligand>
</feature>
<feature type="binding site" evidence="3 7">
    <location>
        <position position="283"/>
    </location>
    <ligand>
        <name>Zn(2+)</name>
        <dbReference type="ChEBI" id="CHEBI:29105"/>
    </ligand>
</feature>
<feature type="mutagenesis site" description="Isolated CTD does not bind metal." evidence="3">
    <original>D</original>
    <variation>A</variation>
    <location>
        <position position="247"/>
    </location>
</feature>
<feature type="helix" evidence="10">
    <location>
        <begin position="213"/>
        <end position="224"/>
    </location>
</feature>
<feature type="strand" evidence="10">
    <location>
        <begin position="231"/>
        <end position="240"/>
    </location>
</feature>
<feature type="strand" evidence="10">
    <location>
        <begin position="243"/>
        <end position="253"/>
    </location>
</feature>
<feature type="helix" evidence="10">
    <location>
        <begin position="258"/>
        <end position="275"/>
    </location>
</feature>
<feature type="strand" evidence="10">
    <location>
        <begin position="279"/>
        <end position="289"/>
    </location>
</feature>
<dbReference type="EMBL" id="FO538765">
    <property type="protein sequence ID" value="CCQ73001.1"/>
    <property type="molecule type" value="Genomic_DNA"/>
</dbReference>
<dbReference type="RefSeq" id="WP_046020684.1">
    <property type="nucleotide sequence ID" value="NZ_FO538765.1"/>
</dbReference>
<dbReference type="PDB" id="5HO1">
    <property type="method" value="X-ray"/>
    <property type="resolution" value="2.53 A"/>
    <property type="chains" value="A/B=213-292"/>
</dbReference>
<dbReference type="PDB" id="5HO3">
    <property type="method" value="X-ray"/>
    <property type="resolution" value="2.15 A"/>
    <property type="chains" value="A/B=213-293"/>
</dbReference>
<dbReference type="PDB" id="5HO5">
    <property type="method" value="X-ray"/>
    <property type="resolution" value="1.99 A"/>
    <property type="chains" value="A/B/C/D=213-292"/>
</dbReference>
<dbReference type="PDB" id="5HOK">
    <property type="method" value="X-ray"/>
    <property type="resolution" value="1.70 A"/>
    <property type="chains" value="A/B/C/D=213-293"/>
</dbReference>
<dbReference type="PDBsum" id="5HO1"/>
<dbReference type="PDBsum" id="5HO3"/>
<dbReference type="PDBsum" id="5HO5"/>
<dbReference type="PDBsum" id="5HOK"/>
<dbReference type="SMR" id="W6KHH6"/>
<dbReference type="STRING" id="1288970.MGMAQ_1061"/>
<dbReference type="KEGG" id="magq:MGMAQ_1061"/>
<dbReference type="HOGENOM" id="CLU_013430_3_3_5"/>
<dbReference type="OrthoDB" id="9806522at2"/>
<dbReference type="Proteomes" id="UP000032733">
    <property type="component" value="Chromosome"/>
</dbReference>
<dbReference type="GO" id="GO:0110146">
    <property type="term" value="C:magnetosome membrane"/>
    <property type="evidence" value="ECO:0000250"/>
    <property type="project" value="UniProtKB"/>
</dbReference>
<dbReference type="GO" id="GO:0046872">
    <property type="term" value="F:metal ion binding"/>
    <property type="evidence" value="ECO:0007669"/>
    <property type="project" value="UniProtKB-KW"/>
</dbReference>
<dbReference type="GO" id="GO:0008324">
    <property type="term" value="F:monoatomic cation transmembrane transporter activity"/>
    <property type="evidence" value="ECO:0007669"/>
    <property type="project" value="InterPro"/>
</dbReference>
<dbReference type="GO" id="GO:0006826">
    <property type="term" value="P:iron ion transport"/>
    <property type="evidence" value="ECO:0007669"/>
    <property type="project" value="UniProtKB-KW"/>
</dbReference>
<dbReference type="FunFam" id="3.30.70.1350:FF:000016">
    <property type="entry name" value="Co/Zn/Cd cation transporter"/>
    <property type="match status" value="1"/>
</dbReference>
<dbReference type="FunFam" id="1.20.1510.10:FF:000006">
    <property type="entry name" value="Divalent cation efflux transporter"/>
    <property type="match status" value="1"/>
</dbReference>
<dbReference type="Gene3D" id="1.20.1510.10">
    <property type="entry name" value="Cation efflux protein transmembrane domain"/>
    <property type="match status" value="1"/>
</dbReference>
<dbReference type="Gene3D" id="3.30.70.1350">
    <property type="entry name" value="Cation efflux protein, cytoplasmic domain"/>
    <property type="match status" value="1"/>
</dbReference>
<dbReference type="InterPro" id="IPR002524">
    <property type="entry name" value="Cation_efflux"/>
</dbReference>
<dbReference type="InterPro" id="IPR027470">
    <property type="entry name" value="Cation_efflux_CTD"/>
</dbReference>
<dbReference type="InterPro" id="IPR036837">
    <property type="entry name" value="Cation_efflux_CTD_sf"/>
</dbReference>
<dbReference type="InterPro" id="IPR027469">
    <property type="entry name" value="Cation_efflux_TMD_sf"/>
</dbReference>
<dbReference type="InterPro" id="IPR050291">
    <property type="entry name" value="CDF_Transporter"/>
</dbReference>
<dbReference type="InterPro" id="IPR053436">
    <property type="entry name" value="Magnetosome_CDF_Transporter"/>
</dbReference>
<dbReference type="NCBIfam" id="TIGR01297">
    <property type="entry name" value="CDF"/>
    <property type="match status" value="1"/>
</dbReference>
<dbReference type="NCBIfam" id="NF033616">
    <property type="entry name" value="CDF_MamB"/>
    <property type="match status" value="1"/>
</dbReference>
<dbReference type="PANTHER" id="PTHR43840">
    <property type="entry name" value="MITOCHONDRIAL METAL TRANSPORTER 1-RELATED"/>
    <property type="match status" value="1"/>
</dbReference>
<dbReference type="PANTHER" id="PTHR43840:SF15">
    <property type="entry name" value="MITOCHONDRIAL METAL TRANSPORTER 1-RELATED"/>
    <property type="match status" value="1"/>
</dbReference>
<dbReference type="Pfam" id="PF01545">
    <property type="entry name" value="Cation_efflux"/>
    <property type="match status" value="1"/>
</dbReference>
<dbReference type="Pfam" id="PF16916">
    <property type="entry name" value="ZT_dimer"/>
    <property type="match status" value="1"/>
</dbReference>
<dbReference type="SUPFAM" id="SSF160240">
    <property type="entry name" value="Cation efflux protein cytoplasmic domain-like"/>
    <property type="match status" value="1"/>
</dbReference>
<dbReference type="SUPFAM" id="SSF161111">
    <property type="entry name" value="Cation efflux protein transmembrane domain-like"/>
    <property type="match status" value="1"/>
</dbReference>
<sequence length="293" mass="31446">MTTAACRKCRDEVIWWAFFINIGQTTYKGVLGVLSGSAALVADAMHSGADVVATLVTMFSVKVSDKKADEKYPFGYGNIQFIASSIVGLILFFGALYLMYESTMQIIAGNTSSPSPFAVLGAIVSIATNELMFRYQSCVGRQNNSPAIIANAWDNRSDALSSVAVLIGIVAAVVGFPIADRLAAIGVGILVAKIGIELNIDAINGLMDTSVENDVLVDAYNIAKDSQHVHGVHYIRGRNVGEDVHLDINIYVDADLKVFESDLVADAIRRKIEAEVDHVRDVHVGVTPVRIAA</sequence>
<protein>
    <recommendedName>
        <fullName evidence="4">Magnetosome protein MamB</fullName>
    </recommendedName>
    <alternativeName>
        <fullName evidence="5">Probable iron transporter MamB</fullName>
    </alternativeName>
</protein>
<gene>
    <name type="primary">mamB</name>
    <name type="ORF">MGMAQ_1061</name>
</gene>
<evidence type="ECO:0000250" key="1">
    <source>
        <dbReference type="UniProtKB" id="V6F510"/>
    </source>
</evidence>
<evidence type="ECO:0000255" key="2"/>
<evidence type="ECO:0000269" key="3">
    <source>
    </source>
</evidence>
<evidence type="ECO:0000303" key="4">
    <source>
    </source>
</evidence>
<evidence type="ECO:0000305" key="5"/>
<evidence type="ECO:0000305" key="6">
    <source>
    </source>
</evidence>
<evidence type="ECO:0007744" key="7">
    <source>
        <dbReference type="PDB" id="5HO1"/>
    </source>
</evidence>
<evidence type="ECO:0007744" key="8">
    <source>
        <dbReference type="PDB" id="5HO3"/>
    </source>
</evidence>
<evidence type="ECO:0007744" key="9">
    <source>
        <dbReference type="PDB" id="5HO5"/>
    </source>
</evidence>
<evidence type="ECO:0007829" key="10">
    <source>
        <dbReference type="PDB" id="5HOK"/>
    </source>
</evidence>
<name>MAMB_MAGSQ</name>
<keyword id="KW-0002">3D-structure</keyword>
<keyword id="KW-0091">Biomineralization</keyword>
<keyword id="KW-0406">Ion transport</keyword>
<keyword id="KW-0408">Iron</keyword>
<keyword id="KW-0410">Iron transport</keyword>
<keyword id="KW-1281">Magnetosome</keyword>
<keyword id="KW-0472">Membrane</keyword>
<keyword id="KW-0479">Metal-binding</keyword>
<keyword id="KW-1185">Reference proteome</keyword>
<keyword id="KW-0812">Transmembrane</keyword>
<keyword id="KW-1133">Transmembrane helix</keyword>
<keyword id="KW-0813">Transport</keyword>
<keyword id="KW-0862">Zinc</keyword>